<evidence type="ECO:0000250" key="1">
    <source>
        <dbReference type="UniProtKB" id="P0CX40"/>
    </source>
</evidence>
<evidence type="ECO:0000256" key="2">
    <source>
        <dbReference type="SAM" id="MobiDB-lite"/>
    </source>
</evidence>
<evidence type="ECO:0000269" key="3">
    <source>
    </source>
</evidence>
<evidence type="ECO:0000269" key="4">
    <source>
    </source>
</evidence>
<evidence type="ECO:0000305" key="5"/>
<gene>
    <name type="primary">rps802</name>
    <name type="synonym">rps8b</name>
    <name type="ORF">SPAC521.05</name>
</gene>
<protein>
    <recommendedName>
        <fullName evidence="5">Small ribosomal subunit protein eS8B</fullName>
    </recommendedName>
    <alternativeName>
        <fullName>40S ribosomal protein S8-B</fullName>
    </alternativeName>
</protein>
<keyword id="KW-0002">3D-structure</keyword>
<keyword id="KW-0963">Cytoplasm</keyword>
<keyword id="KW-0597">Phosphoprotein</keyword>
<keyword id="KW-1185">Reference proteome</keyword>
<keyword id="KW-0687">Ribonucleoprotein</keyword>
<keyword id="KW-0689">Ribosomal protein</keyword>
<proteinExistence type="evidence at protein level"/>
<accession>Q9P7B2</accession>
<name>RS8B_SCHPO</name>
<sequence length="200" mass="22564">MGITRDSRHKRSATGAKRAQYRKKRKFELGRQPSNTRIGPKRIHEVRVRGGNKKFRALRLDSGNFSWGSEGVSKKTRIIQVAYHPSNNELVRTNTLTKSAIVQIDAAPFRVWYETHYGILMGSKGKKATATPTPKSKHVQRKHSARLGDSKVDSALETQFAAGRLYAVVSSRPGQSGRCDGYILEGEELHFYLRRMAPKK</sequence>
<reference key="1">
    <citation type="journal article" date="2002" name="Nature">
        <title>The genome sequence of Schizosaccharomyces pombe.</title>
        <authorList>
            <person name="Wood V."/>
            <person name="Gwilliam R."/>
            <person name="Rajandream M.A."/>
            <person name="Lyne M.H."/>
            <person name="Lyne R."/>
            <person name="Stewart A."/>
            <person name="Sgouros J.G."/>
            <person name="Peat N."/>
            <person name="Hayles J."/>
            <person name="Baker S.G."/>
            <person name="Basham D."/>
            <person name="Bowman S."/>
            <person name="Brooks K."/>
            <person name="Brown D."/>
            <person name="Brown S."/>
            <person name="Chillingworth T."/>
            <person name="Churcher C.M."/>
            <person name="Collins M."/>
            <person name="Connor R."/>
            <person name="Cronin A."/>
            <person name="Davis P."/>
            <person name="Feltwell T."/>
            <person name="Fraser A."/>
            <person name="Gentles S."/>
            <person name="Goble A."/>
            <person name="Hamlin N."/>
            <person name="Harris D.E."/>
            <person name="Hidalgo J."/>
            <person name="Hodgson G."/>
            <person name="Holroyd S."/>
            <person name="Hornsby T."/>
            <person name="Howarth S."/>
            <person name="Huckle E.J."/>
            <person name="Hunt S."/>
            <person name="Jagels K."/>
            <person name="James K.D."/>
            <person name="Jones L."/>
            <person name="Jones M."/>
            <person name="Leather S."/>
            <person name="McDonald S."/>
            <person name="McLean J."/>
            <person name="Mooney P."/>
            <person name="Moule S."/>
            <person name="Mungall K.L."/>
            <person name="Murphy L.D."/>
            <person name="Niblett D."/>
            <person name="Odell C."/>
            <person name="Oliver K."/>
            <person name="O'Neil S."/>
            <person name="Pearson D."/>
            <person name="Quail M.A."/>
            <person name="Rabbinowitsch E."/>
            <person name="Rutherford K.M."/>
            <person name="Rutter S."/>
            <person name="Saunders D."/>
            <person name="Seeger K."/>
            <person name="Sharp S."/>
            <person name="Skelton J."/>
            <person name="Simmonds M.N."/>
            <person name="Squares R."/>
            <person name="Squares S."/>
            <person name="Stevens K."/>
            <person name="Taylor K."/>
            <person name="Taylor R.G."/>
            <person name="Tivey A."/>
            <person name="Walsh S.V."/>
            <person name="Warren T."/>
            <person name="Whitehead S."/>
            <person name="Woodward J.R."/>
            <person name="Volckaert G."/>
            <person name="Aert R."/>
            <person name="Robben J."/>
            <person name="Grymonprez B."/>
            <person name="Weltjens I."/>
            <person name="Vanstreels E."/>
            <person name="Rieger M."/>
            <person name="Schaefer M."/>
            <person name="Mueller-Auer S."/>
            <person name="Gabel C."/>
            <person name="Fuchs M."/>
            <person name="Duesterhoeft A."/>
            <person name="Fritzc C."/>
            <person name="Holzer E."/>
            <person name="Moestl D."/>
            <person name="Hilbert H."/>
            <person name="Borzym K."/>
            <person name="Langer I."/>
            <person name="Beck A."/>
            <person name="Lehrach H."/>
            <person name="Reinhardt R."/>
            <person name="Pohl T.M."/>
            <person name="Eger P."/>
            <person name="Zimmermann W."/>
            <person name="Wedler H."/>
            <person name="Wambutt R."/>
            <person name="Purnelle B."/>
            <person name="Goffeau A."/>
            <person name="Cadieu E."/>
            <person name="Dreano S."/>
            <person name="Gloux S."/>
            <person name="Lelaure V."/>
            <person name="Mottier S."/>
            <person name="Galibert F."/>
            <person name="Aves S.J."/>
            <person name="Xiang Z."/>
            <person name="Hunt C."/>
            <person name="Moore K."/>
            <person name="Hurst S.M."/>
            <person name="Lucas M."/>
            <person name="Rochet M."/>
            <person name="Gaillardin C."/>
            <person name="Tallada V.A."/>
            <person name="Garzon A."/>
            <person name="Thode G."/>
            <person name="Daga R.R."/>
            <person name="Cruzado L."/>
            <person name="Jimenez J."/>
            <person name="Sanchez M."/>
            <person name="del Rey F."/>
            <person name="Benito J."/>
            <person name="Dominguez A."/>
            <person name="Revuelta J.L."/>
            <person name="Moreno S."/>
            <person name="Armstrong J."/>
            <person name="Forsburg S.L."/>
            <person name="Cerutti L."/>
            <person name="Lowe T."/>
            <person name="McCombie W.R."/>
            <person name="Paulsen I."/>
            <person name="Potashkin J."/>
            <person name="Shpakovski G.V."/>
            <person name="Ussery D."/>
            <person name="Barrell B.G."/>
            <person name="Nurse P."/>
        </authorList>
    </citation>
    <scope>NUCLEOTIDE SEQUENCE [LARGE SCALE GENOMIC DNA]</scope>
    <source>
        <strain>972 / ATCC 24843</strain>
    </source>
</reference>
<reference key="2">
    <citation type="journal article" date="2006" name="Nat. Biotechnol.">
        <title>ORFeome cloning and global analysis of protein localization in the fission yeast Schizosaccharomyces pombe.</title>
        <authorList>
            <person name="Matsuyama A."/>
            <person name="Arai R."/>
            <person name="Yashiroda Y."/>
            <person name="Shirai A."/>
            <person name="Kamata A."/>
            <person name="Sekido S."/>
            <person name="Kobayashi Y."/>
            <person name="Hashimoto A."/>
            <person name="Hamamoto M."/>
            <person name="Hiraoka Y."/>
            <person name="Horinouchi S."/>
            <person name="Yoshida M."/>
        </authorList>
    </citation>
    <scope>SUBCELLULAR LOCATION [LARGE SCALE ANALYSIS]</scope>
</reference>
<reference key="3">
    <citation type="journal article" date="2008" name="J. Proteome Res.">
        <title>Phosphoproteome analysis of fission yeast.</title>
        <authorList>
            <person name="Wilson-Grady J.T."/>
            <person name="Villen J."/>
            <person name="Gygi S.P."/>
        </authorList>
    </citation>
    <scope>PHOSPHORYLATION [LARGE SCALE ANALYSIS] AT SER-62; SER-99; SER-150; SER-154 AND SER-171</scope>
    <scope>IDENTIFICATION BY MASS SPECTROMETRY</scope>
</reference>
<organism>
    <name type="scientific">Schizosaccharomyces pombe (strain 972 / ATCC 24843)</name>
    <name type="common">Fission yeast</name>
    <dbReference type="NCBI Taxonomy" id="284812"/>
    <lineage>
        <taxon>Eukaryota</taxon>
        <taxon>Fungi</taxon>
        <taxon>Dikarya</taxon>
        <taxon>Ascomycota</taxon>
        <taxon>Taphrinomycotina</taxon>
        <taxon>Schizosaccharomycetes</taxon>
        <taxon>Schizosaccharomycetales</taxon>
        <taxon>Schizosaccharomycetaceae</taxon>
        <taxon>Schizosaccharomyces</taxon>
    </lineage>
</organism>
<comment type="function">
    <text evidence="1">Component of the ribosome, a large ribonucleoprotein complex responsible for the synthesis of proteins in the cell. The small ribosomal subunit (SSU) binds messenger RNAs (mRNAs) and translates the encoded message by selecting cognate aminoacyl-transfer RNA (tRNA) molecules. The large subunit (LSU) contains the ribosomal catalytic site termed the peptidyl transferase center (PTC), which catalyzes the formation of peptide bonds, thereby polymerizing the amino acids delivered by tRNAs into a polypeptide chain. The nascent polypeptides leave the ribosome through a tunnel in the LSU and interact with protein factors that function in enzymatic processing, targeting, and the membrane insertion of nascent chains at the exit of the ribosomal tunnel.</text>
</comment>
<comment type="subunit">
    <text evidence="1">Component of the small ribosomal subunit (SSU). Mature yeast ribosomes consist of a small (40S) and a large (60S) subunit. The 40S small subunit contains 1 molecule of ribosomal RNA (18S rRNA) and at least 33 different proteins. The large 60S subunit contains 3 rRNA molecules (25S, 5.8S and 5S rRNA) and at least 46 different proteins.</text>
</comment>
<comment type="subcellular location">
    <subcellularLocation>
        <location evidence="3">Cytoplasm</location>
    </subcellularLocation>
</comment>
<comment type="miscellaneous">
    <text>There are 2 genes for eS8 in S.pombe.</text>
</comment>
<comment type="similarity">
    <text evidence="5">Belongs to the eukaryotic ribosomal protein eS8 family.</text>
</comment>
<dbReference type="EMBL" id="CU329670">
    <property type="protein sequence ID" value="CAB86469.1"/>
    <property type="molecule type" value="Genomic_DNA"/>
</dbReference>
<dbReference type="RefSeq" id="NP_593100.1">
    <property type="nucleotide sequence ID" value="NM_001018497.2"/>
</dbReference>
<dbReference type="PDB" id="9AXT">
    <property type="method" value="EM"/>
    <property type="resolution" value="2.40 A"/>
    <property type="chains" value="AL=1-200"/>
</dbReference>
<dbReference type="PDB" id="9AXV">
    <property type="method" value="EM"/>
    <property type="resolution" value="2.40 A"/>
    <property type="chains" value="AL=1-200"/>
</dbReference>
<dbReference type="PDBsum" id="9AXT"/>
<dbReference type="PDBsum" id="9AXV"/>
<dbReference type="EMDB" id="EMD-43972"/>
<dbReference type="EMDB" id="EMD-43976"/>
<dbReference type="SMR" id="Q9P7B2"/>
<dbReference type="BioGRID" id="279776">
    <property type="interactions" value="12"/>
</dbReference>
<dbReference type="FunCoup" id="Q9P7B2">
    <property type="interactions" value="485"/>
</dbReference>
<dbReference type="IntAct" id="Q9P7B2">
    <property type="interactions" value="2"/>
</dbReference>
<dbReference type="STRING" id="284812.Q9P7B2"/>
<dbReference type="iPTMnet" id="Q9P7B2"/>
<dbReference type="PaxDb" id="4896-SPAC521.05.1"/>
<dbReference type="EnsemblFungi" id="SPAC521.05.1">
    <property type="protein sequence ID" value="SPAC521.05.1:pep"/>
    <property type="gene ID" value="SPAC521.05"/>
</dbReference>
<dbReference type="GeneID" id="2543354"/>
<dbReference type="KEGG" id="spo:2543354"/>
<dbReference type="PomBase" id="SPAC521.05">
    <property type="gene designation" value="rps802"/>
</dbReference>
<dbReference type="VEuPathDB" id="FungiDB:SPAC521.05"/>
<dbReference type="eggNOG" id="KOG3283">
    <property type="taxonomic scope" value="Eukaryota"/>
</dbReference>
<dbReference type="HOGENOM" id="CLU_080597_1_1_1"/>
<dbReference type="InParanoid" id="Q9P7B2"/>
<dbReference type="OMA" id="QRPHYRK"/>
<dbReference type="PhylomeDB" id="Q9P7B2"/>
<dbReference type="Reactome" id="R-SPO-156827">
    <property type="pathway name" value="L13a-mediated translational silencing of Ceruloplasmin expression"/>
</dbReference>
<dbReference type="Reactome" id="R-SPO-1799339">
    <property type="pathway name" value="SRP-dependent cotranslational protein targeting to membrane"/>
</dbReference>
<dbReference type="Reactome" id="R-SPO-72649">
    <property type="pathway name" value="Translation initiation complex formation"/>
</dbReference>
<dbReference type="Reactome" id="R-SPO-72689">
    <property type="pathway name" value="Formation of a pool of free 40S subunits"/>
</dbReference>
<dbReference type="Reactome" id="R-SPO-72695">
    <property type="pathway name" value="Formation of the ternary complex, and subsequently, the 43S complex"/>
</dbReference>
<dbReference type="Reactome" id="R-SPO-72702">
    <property type="pathway name" value="Ribosomal scanning and start codon recognition"/>
</dbReference>
<dbReference type="Reactome" id="R-SPO-72706">
    <property type="pathway name" value="GTP hydrolysis and joining of the 60S ribosomal subunit"/>
</dbReference>
<dbReference type="Reactome" id="R-SPO-975956">
    <property type="pathway name" value="Nonsense Mediated Decay (NMD) independent of the Exon Junction Complex (EJC)"/>
</dbReference>
<dbReference type="Reactome" id="R-SPO-975957">
    <property type="pathway name" value="Nonsense Mediated Decay (NMD) enhanced by the Exon Junction Complex (EJC)"/>
</dbReference>
<dbReference type="PRO" id="PR:Q9P7B2"/>
<dbReference type="Proteomes" id="UP000002485">
    <property type="component" value="Chromosome I"/>
</dbReference>
<dbReference type="GO" id="GO:0005829">
    <property type="term" value="C:cytosol"/>
    <property type="evidence" value="ECO:0007005"/>
    <property type="project" value="PomBase"/>
</dbReference>
<dbReference type="GO" id="GO:0022627">
    <property type="term" value="C:cytosolic small ribosomal subunit"/>
    <property type="evidence" value="ECO:0000269"/>
    <property type="project" value="PomBase"/>
</dbReference>
<dbReference type="GO" id="GO:0003735">
    <property type="term" value="F:structural constituent of ribosome"/>
    <property type="evidence" value="ECO:0000318"/>
    <property type="project" value="GO_Central"/>
</dbReference>
<dbReference type="GO" id="GO:0002181">
    <property type="term" value="P:cytoplasmic translation"/>
    <property type="evidence" value="ECO:0000315"/>
    <property type="project" value="PomBase"/>
</dbReference>
<dbReference type="GO" id="GO:0002182">
    <property type="term" value="P:cytoplasmic translational elongation"/>
    <property type="evidence" value="ECO:0000303"/>
    <property type="project" value="PomBase"/>
</dbReference>
<dbReference type="GO" id="GO:0000462">
    <property type="term" value="P:maturation of SSU-rRNA from tricistronic rRNA transcript (SSU-rRNA, 5.8S rRNA, LSU-rRNA)"/>
    <property type="evidence" value="ECO:0000318"/>
    <property type="project" value="GO_Central"/>
</dbReference>
<dbReference type="CDD" id="cd11380">
    <property type="entry name" value="Ribosomal_S8e_like"/>
    <property type="match status" value="1"/>
</dbReference>
<dbReference type="FunFam" id="1.10.168.20:FF:000001">
    <property type="entry name" value="40S ribosomal protein S8"/>
    <property type="match status" value="1"/>
</dbReference>
<dbReference type="Gene3D" id="3.10.290.70">
    <property type="match status" value="1"/>
</dbReference>
<dbReference type="Gene3D" id="1.10.168.20">
    <property type="entry name" value="Ribosomal protein S8e, subdomain"/>
    <property type="match status" value="1"/>
</dbReference>
<dbReference type="InterPro" id="IPR001047">
    <property type="entry name" value="Ribosomal_eS8"/>
</dbReference>
<dbReference type="InterPro" id="IPR018283">
    <property type="entry name" value="Ribosomal_eS8_CS"/>
</dbReference>
<dbReference type="InterPro" id="IPR042563">
    <property type="entry name" value="Ribosomal_protein_eS8_euk"/>
</dbReference>
<dbReference type="InterPro" id="IPR022309">
    <property type="entry name" value="Ribosomal_Se8/biogenesis_NSA2"/>
</dbReference>
<dbReference type="NCBIfam" id="TIGR00307">
    <property type="entry name" value="eS8"/>
    <property type="match status" value="1"/>
</dbReference>
<dbReference type="PANTHER" id="PTHR10394">
    <property type="entry name" value="40S RIBOSOMAL PROTEIN S8"/>
    <property type="match status" value="1"/>
</dbReference>
<dbReference type="Pfam" id="PF01201">
    <property type="entry name" value="Ribosomal_S8e"/>
    <property type="match status" value="1"/>
</dbReference>
<dbReference type="PROSITE" id="PS01193">
    <property type="entry name" value="RIBOSOMAL_S8E"/>
    <property type="match status" value="1"/>
</dbReference>
<feature type="chain" id="PRO_0000122257" description="Small ribosomal subunit protein eS8B">
    <location>
        <begin position="1"/>
        <end position="200"/>
    </location>
</feature>
<feature type="region of interest" description="Disordered" evidence="2">
    <location>
        <begin position="1"/>
        <end position="41"/>
    </location>
</feature>
<feature type="region of interest" description="Disordered" evidence="2">
    <location>
        <begin position="124"/>
        <end position="145"/>
    </location>
</feature>
<feature type="compositionally biased region" description="Basic residues" evidence="2">
    <location>
        <begin position="135"/>
        <end position="145"/>
    </location>
</feature>
<feature type="modified residue" description="Phosphoserine" evidence="4">
    <location>
        <position position="62"/>
    </location>
</feature>
<feature type="modified residue" description="Phosphoserine" evidence="4">
    <location>
        <position position="99"/>
    </location>
</feature>
<feature type="modified residue" description="Phosphoserine" evidence="4">
    <location>
        <position position="150"/>
    </location>
</feature>
<feature type="modified residue" description="Phosphoserine" evidence="4">
    <location>
        <position position="154"/>
    </location>
</feature>
<feature type="modified residue" description="Phosphoserine" evidence="4">
    <location>
        <position position="171"/>
    </location>
</feature>